<organism>
    <name type="scientific">Mus musculus</name>
    <name type="common">Mouse</name>
    <dbReference type="NCBI Taxonomy" id="10090"/>
    <lineage>
        <taxon>Eukaryota</taxon>
        <taxon>Metazoa</taxon>
        <taxon>Chordata</taxon>
        <taxon>Craniata</taxon>
        <taxon>Vertebrata</taxon>
        <taxon>Euteleostomi</taxon>
        <taxon>Mammalia</taxon>
        <taxon>Eutheria</taxon>
        <taxon>Euarchontoglires</taxon>
        <taxon>Glires</taxon>
        <taxon>Rodentia</taxon>
        <taxon>Myomorpha</taxon>
        <taxon>Muroidea</taxon>
        <taxon>Muridae</taxon>
        <taxon>Murinae</taxon>
        <taxon>Mus</taxon>
        <taxon>Mus</taxon>
    </lineage>
</organism>
<accession>Q9WU62</accession>
<accession>Q7TN28</accession>
<accession>Q8BGN4</accession>
<accession>Q8CGI4</accession>
<proteinExistence type="evidence at protein level"/>
<gene>
    <name type="primary">Incenp</name>
</gene>
<dbReference type="EMBL" id="AF117610">
    <property type="protein sequence ID" value="AAD32094.1"/>
    <property type="molecule type" value="mRNA"/>
</dbReference>
<dbReference type="EMBL" id="AB100432">
    <property type="protein sequence ID" value="BAC55879.1"/>
    <property type="molecule type" value="mRNA"/>
</dbReference>
<dbReference type="EMBL" id="AB100433">
    <property type="protein sequence ID" value="BAC55880.1"/>
    <property type="molecule type" value="mRNA"/>
</dbReference>
<dbReference type="EMBL" id="AK081841">
    <property type="protein sequence ID" value="BAC38346.1"/>
    <property type="molecule type" value="mRNA"/>
</dbReference>
<dbReference type="EMBL" id="AK088627">
    <property type="protein sequence ID" value="BAC40462.1"/>
    <property type="molecule type" value="mRNA"/>
</dbReference>
<dbReference type="EMBL" id="BC037011">
    <property type="protein sequence ID" value="AAH37011.1"/>
    <property type="molecule type" value="mRNA"/>
</dbReference>
<dbReference type="EMBL" id="BC052414">
    <property type="protein sequence ID" value="AAH52414.1"/>
    <property type="molecule type" value="mRNA"/>
</dbReference>
<dbReference type="CCDS" id="CCDS37912.1">
    <molecule id="Q9WU62-2"/>
</dbReference>
<dbReference type="CCDS" id="CCDS89338.1">
    <molecule id="Q9WU62-1"/>
</dbReference>
<dbReference type="RefSeq" id="NP_001356285.1">
    <molecule id="Q9WU62-1"/>
    <property type="nucleotide sequence ID" value="NM_001369356.1"/>
</dbReference>
<dbReference type="RefSeq" id="NP_057901.2">
    <molecule id="Q9WU62-2"/>
    <property type="nucleotide sequence ID" value="NM_016692.4"/>
</dbReference>
<dbReference type="RefSeq" id="XP_006526775.1">
    <property type="nucleotide sequence ID" value="XM_006526712.1"/>
</dbReference>
<dbReference type="SMR" id="Q9WU62"/>
<dbReference type="BioGRID" id="200760">
    <property type="interactions" value="11"/>
</dbReference>
<dbReference type="ComplexPortal" id="CPX-119">
    <property type="entry name" value="Chromosomal passenger complex"/>
</dbReference>
<dbReference type="DIP" id="DIP-56678N"/>
<dbReference type="FunCoup" id="Q9WU62">
    <property type="interactions" value="1521"/>
</dbReference>
<dbReference type="IntAct" id="Q9WU62">
    <property type="interactions" value="9"/>
</dbReference>
<dbReference type="STRING" id="10090.ENSMUSP00000025562"/>
<dbReference type="GlyConnect" id="806">
    <property type="glycosylation" value="1 N-Linked glycan (1 site)"/>
</dbReference>
<dbReference type="GlyCosmos" id="Q9WU62">
    <property type="glycosylation" value="1 site, 1 glycan"/>
</dbReference>
<dbReference type="GlyGen" id="Q9WU62">
    <property type="glycosylation" value="1 site, 1 N-linked glycan (1 site)"/>
</dbReference>
<dbReference type="iPTMnet" id="Q9WU62"/>
<dbReference type="PhosphoSitePlus" id="Q9WU62"/>
<dbReference type="jPOST" id="Q9WU62"/>
<dbReference type="PaxDb" id="10090-ENSMUSP00000025562"/>
<dbReference type="PeptideAtlas" id="Q9WU62"/>
<dbReference type="ProteomicsDB" id="267135">
    <molecule id="Q9WU62-1"/>
</dbReference>
<dbReference type="ProteomicsDB" id="267136">
    <molecule id="Q9WU62-2"/>
</dbReference>
<dbReference type="Pumba" id="Q9WU62"/>
<dbReference type="Antibodypedia" id="4598">
    <property type="antibodies" value="179 antibodies from 31 providers"/>
</dbReference>
<dbReference type="DNASU" id="16319"/>
<dbReference type="Ensembl" id="ENSMUST00000025562.9">
    <molecule id="Q9WU62-2"/>
    <property type="protein sequence ID" value="ENSMUSP00000025562.8"/>
    <property type="gene ID" value="ENSMUSG00000024660.10"/>
</dbReference>
<dbReference type="Ensembl" id="ENSMUST00000237439.2">
    <molecule id="Q9WU62-1"/>
    <property type="protein sequence ID" value="ENSMUSP00000157547.2"/>
    <property type="gene ID" value="ENSMUSG00000024660.10"/>
</dbReference>
<dbReference type="GeneID" id="16319"/>
<dbReference type="KEGG" id="mmu:16319"/>
<dbReference type="UCSC" id="uc008gor.2">
    <molecule id="Q9WU62-1"/>
    <property type="organism name" value="mouse"/>
</dbReference>
<dbReference type="UCSC" id="uc008gos.2">
    <molecule id="Q9WU62-2"/>
    <property type="organism name" value="mouse"/>
</dbReference>
<dbReference type="AGR" id="MGI:1313288"/>
<dbReference type="CTD" id="3619"/>
<dbReference type="MGI" id="MGI:1313288">
    <property type="gene designation" value="Incenp"/>
</dbReference>
<dbReference type="VEuPathDB" id="HostDB:ENSMUSG00000024660"/>
<dbReference type="eggNOG" id="KOG4456">
    <property type="taxonomic scope" value="Eukaryota"/>
</dbReference>
<dbReference type="GeneTree" id="ENSGT00730000111073"/>
<dbReference type="HOGENOM" id="CLU_015997_0_0_1"/>
<dbReference type="InParanoid" id="Q9WU62"/>
<dbReference type="OMA" id="DERYDHQ"/>
<dbReference type="OrthoDB" id="6123at2759"/>
<dbReference type="PhylomeDB" id="Q9WU62"/>
<dbReference type="TreeFam" id="TF101172"/>
<dbReference type="Reactome" id="R-MMU-141444">
    <property type="pathway name" value="Amplification of signal from unattached kinetochores via a MAD2 inhibitory signal"/>
</dbReference>
<dbReference type="Reactome" id="R-MMU-2467813">
    <property type="pathway name" value="Separation of Sister Chromatids"/>
</dbReference>
<dbReference type="Reactome" id="R-MMU-2500257">
    <property type="pathway name" value="Resolution of Sister Chromatid Cohesion"/>
</dbReference>
<dbReference type="Reactome" id="R-MMU-4615885">
    <property type="pathway name" value="SUMOylation of DNA replication proteins"/>
</dbReference>
<dbReference type="Reactome" id="R-MMU-5663220">
    <property type="pathway name" value="RHO GTPases Activate Formins"/>
</dbReference>
<dbReference type="Reactome" id="R-MMU-68877">
    <property type="pathway name" value="Mitotic Prometaphase"/>
</dbReference>
<dbReference type="Reactome" id="R-MMU-9648025">
    <property type="pathway name" value="EML4 and NUDC in mitotic spindle formation"/>
</dbReference>
<dbReference type="BioGRID-ORCS" id="16319">
    <property type="hits" value="24 hits in 78 CRISPR screens"/>
</dbReference>
<dbReference type="ChiTaRS" id="Incenp">
    <property type="organism name" value="mouse"/>
</dbReference>
<dbReference type="PRO" id="PR:Q9WU62"/>
<dbReference type="Proteomes" id="UP000000589">
    <property type="component" value="Chromosome 19"/>
</dbReference>
<dbReference type="RNAct" id="Q9WU62">
    <property type="molecule type" value="protein"/>
</dbReference>
<dbReference type="Bgee" id="ENSMUSG00000024660">
    <property type="expression patterns" value="Expressed in respiratory primordium and 249 other cell types or tissues"/>
</dbReference>
<dbReference type="ExpressionAtlas" id="Q9WU62">
    <property type="expression patterns" value="baseline and differential"/>
</dbReference>
<dbReference type="GO" id="GO:0000801">
    <property type="term" value="C:central element"/>
    <property type="evidence" value="ECO:0000314"/>
    <property type="project" value="MGI"/>
</dbReference>
<dbReference type="GO" id="GO:0010369">
    <property type="term" value="C:chromocenter"/>
    <property type="evidence" value="ECO:0000314"/>
    <property type="project" value="MGI"/>
</dbReference>
<dbReference type="GO" id="GO:0032133">
    <property type="term" value="C:chromosome passenger complex"/>
    <property type="evidence" value="ECO:0000266"/>
    <property type="project" value="ComplexPortal"/>
</dbReference>
<dbReference type="GO" id="GO:0000775">
    <property type="term" value="C:chromosome, centromeric region"/>
    <property type="evidence" value="ECO:0000314"/>
    <property type="project" value="MGI"/>
</dbReference>
<dbReference type="GO" id="GO:0005829">
    <property type="term" value="C:cytosol"/>
    <property type="evidence" value="ECO:0007669"/>
    <property type="project" value="Ensembl"/>
</dbReference>
<dbReference type="GO" id="GO:0000776">
    <property type="term" value="C:kinetochore"/>
    <property type="evidence" value="ECO:0000250"/>
    <property type="project" value="UniProtKB"/>
</dbReference>
<dbReference type="GO" id="GO:0000800">
    <property type="term" value="C:lateral element"/>
    <property type="evidence" value="ECO:0000314"/>
    <property type="project" value="MGI"/>
</dbReference>
<dbReference type="GO" id="GO:0005874">
    <property type="term" value="C:microtubule"/>
    <property type="evidence" value="ECO:0007669"/>
    <property type="project" value="UniProtKB-KW"/>
</dbReference>
<dbReference type="GO" id="GO:0015630">
    <property type="term" value="C:microtubule cytoskeleton"/>
    <property type="evidence" value="ECO:0000266"/>
    <property type="project" value="ComplexPortal"/>
</dbReference>
<dbReference type="GO" id="GO:0030496">
    <property type="term" value="C:midbody"/>
    <property type="evidence" value="ECO:0000314"/>
    <property type="project" value="MGI"/>
</dbReference>
<dbReference type="GO" id="GO:0016604">
    <property type="term" value="C:nuclear body"/>
    <property type="evidence" value="ECO:0007669"/>
    <property type="project" value="Ensembl"/>
</dbReference>
<dbReference type="GO" id="GO:0005721">
    <property type="term" value="C:pericentric heterochromatin"/>
    <property type="evidence" value="ECO:0000250"/>
    <property type="project" value="UniProtKB"/>
</dbReference>
<dbReference type="GO" id="GO:0032991">
    <property type="term" value="C:protein-containing complex"/>
    <property type="evidence" value="ECO:0000250"/>
    <property type="project" value="UniProtKB"/>
</dbReference>
<dbReference type="GO" id="GO:0005819">
    <property type="term" value="C:spindle"/>
    <property type="evidence" value="ECO:0000250"/>
    <property type="project" value="UniProtKB"/>
</dbReference>
<dbReference type="GO" id="GO:0000795">
    <property type="term" value="C:synaptonemal complex"/>
    <property type="evidence" value="ECO:0000314"/>
    <property type="project" value="MGI"/>
</dbReference>
<dbReference type="GO" id="GO:0140677">
    <property type="term" value="F:molecular function activator activity"/>
    <property type="evidence" value="ECO:0007669"/>
    <property type="project" value="Ensembl"/>
</dbReference>
<dbReference type="GO" id="GO:0007059">
    <property type="term" value="P:chromosome segregation"/>
    <property type="evidence" value="ECO:0000250"/>
    <property type="project" value="UniProtKB"/>
</dbReference>
<dbReference type="GO" id="GO:0000278">
    <property type="term" value="P:mitotic cell cycle"/>
    <property type="evidence" value="ECO:0000303"/>
    <property type="project" value="ComplexPortal"/>
</dbReference>
<dbReference type="GO" id="GO:0000281">
    <property type="term" value="P:mitotic cytokinesis"/>
    <property type="evidence" value="ECO:0000250"/>
    <property type="project" value="UniProtKB"/>
</dbReference>
<dbReference type="GO" id="GO:0051256">
    <property type="term" value="P:mitotic spindle midzone assembly"/>
    <property type="evidence" value="ECO:0000303"/>
    <property type="project" value="ComplexPortal"/>
</dbReference>
<dbReference type="GO" id="GO:0007052">
    <property type="term" value="P:mitotic spindle organization"/>
    <property type="evidence" value="ECO:0000303"/>
    <property type="project" value="ComplexPortal"/>
</dbReference>
<dbReference type="GO" id="GO:1902425">
    <property type="term" value="P:positive regulation of attachment of mitotic spindle microtubules to kinetochore"/>
    <property type="evidence" value="ECO:0000303"/>
    <property type="project" value="ComplexPortal"/>
</dbReference>
<dbReference type="GO" id="GO:0090267">
    <property type="term" value="P:positive regulation of mitotic cell cycle spindle assembly checkpoint"/>
    <property type="evidence" value="ECO:0000303"/>
    <property type="project" value="ComplexPortal"/>
</dbReference>
<dbReference type="GO" id="GO:1903490">
    <property type="term" value="P:positive regulation of mitotic cytokinesis"/>
    <property type="evidence" value="ECO:0000303"/>
    <property type="project" value="ComplexPortal"/>
</dbReference>
<dbReference type="GO" id="GO:1901970">
    <property type="term" value="P:positive regulation of mitotic sister chromatid separation"/>
    <property type="evidence" value="ECO:0000303"/>
    <property type="project" value="ComplexPortal"/>
</dbReference>
<dbReference type="FunFam" id="1.20.5.3600:FF:000001">
    <property type="entry name" value="inner centromere protein-like"/>
    <property type="match status" value="1"/>
</dbReference>
<dbReference type="Gene3D" id="1.20.5.2230">
    <property type="match status" value="1"/>
</dbReference>
<dbReference type="Gene3D" id="1.20.5.3600">
    <property type="match status" value="1"/>
</dbReference>
<dbReference type="InterPro" id="IPR022006">
    <property type="entry name" value="INCENP_N"/>
</dbReference>
<dbReference type="InterPro" id="IPR005635">
    <property type="entry name" value="Inner_centromere_prot_ARK-bd"/>
</dbReference>
<dbReference type="PANTHER" id="PTHR13142">
    <property type="entry name" value="INNER CENTROMERE PROTEIN"/>
    <property type="match status" value="1"/>
</dbReference>
<dbReference type="PANTHER" id="PTHR13142:SF1">
    <property type="entry name" value="INNER CENTROMERE PROTEIN"/>
    <property type="match status" value="1"/>
</dbReference>
<dbReference type="Pfam" id="PF03941">
    <property type="entry name" value="INCENP_ARK-bind"/>
    <property type="match status" value="1"/>
</dbReference>
<dbReference type="Pfam" id="PF12178">
    <property type="entry name" value="INCENP_N"/>
    <property type="match status" value="1"/>
</dbReference>
<protein>
    <recommendedName>
        <fullName>Inner centromere protein</fullName>
    </recommendedName>
</protein>
<comment type="function">
    <text evidence="3 4">Component of the chromosomal passenger complex (CPC), a complex that acts as a key regulator of mitosis. The CPC complex has essential functions at the centromere in ensuring correct chromosome alignment and segregation and is required for chromatin-induced microtubule stabilization and spindle assembly. Acts as a scaffold regulating CPC localization and activity. The C-terminus associates with AURKB or AURKC, the N-terminus associated with BIRC5/survivin and CDCA8/borealin tethers the CPC to the inner centromere, and the microtubule binding activity within the central SAH domain directs AURKB/C toward substrates near microtubules. The flexibility of the SAH domain is proposed to allow AURKB/C to follow substrates on dynamic microtubules while ensuring CPC docking to static chromatin (By similarity). Activates AURKB and AURKC. Controls the kinetochore localization of BUB1.</text>
</comment>
<comment type="subunit">
    <text evidence="3 4 8">Component of the chromosomal passenger complex (CPC) composed of at least BIRC5/survivin, CDCA8/borealin, INCENP, AURKB or AURKC; in the complex binds directly to AURKB or AURKC via the IN box, and forms a triple-helix bundle-based subcomplex with BIRC5 and CDCA8 via its N-terminus. The reported homodimerization is questioned as the SAH domain is shown to be monomeric. Interacts with H2AZ1. Interacts with CBX1 and CBX3. Interacts with tubulin beta chain. Interacts with EVI5. Interacts with CBX5; POGZ and INCENP compete for interaction with CBX5. Interacts with POGZ. Interacts with JTB.</text>
</comment>
<comment type="subcellular location">
    <subcellularLocation>
        <location evidence="7">Chromosome</location>
        <location evidence="7">Centromere</location>
    </subcellularLocation>
    <subcellularLocation>
        <location evidence="7">Cytoplasm</location>
        <location evidence="7">Cytoskeleton</location>
        <location evidence="7">Spindle</location>
    </subcellularLocation>
    <subcellularLocation>
        <location evidence="7">Nucleus</location>
    </subcellularLocation>
    <subcellularLocation>
        <location evidence="7">Chromosome</location>
        <location evidence="7">Centromere</location>
        <location evidence="7">Kinetochore</location>
    </subcellularLocation>
    <subcellularLocation>
        <location evidence="4">Midbody</location>
    </subcellularLocation>
    <text evidence="4 7">Localizes to inner kinetochore. Localizes on chromosome arms and inner centromeres from prophase through metaphase and then transferring to the spindle midzone and midbody from anaphase through cytokinesis. Colocalizes to the equatorial cell cortex at anaphase (By similarity). Localized at synaptonemal complex central element from zygotene up to late pachytene when it begins to relocalize to heterochromatic chromocenters (PubMed:12584241). Colocalizes with AURKB at a connecting strand traversing the centromere region and joining sister kinetochores, in metaphase II centromeres. This strand disappears at the metaphase II/anaphase II transition and relocalizes to the spindle midzone (PubMed:12584241).</text>
</comment>
<comment type="alternative products">
    <event type="alternative splicing"/>
    <isoform>
        <id>Q9WU62-1</id>
        <name>1</name>
        <name>B</name>
        <sequence type="displayed"/>
    </isoform>
    <isoform>
        <id>Q9WU62-2</id>
        <name>2</name>
        <name>A</name>
        <sequence type="described" ref="VSP_007233"/>
    </isoform>
</comment>
<comment type="domain">
    <text evidence="2 4">The IN box mediates interaction with AURKB and AURKC.</text>
</comment>
<comment type="domain">
    <text evidence="3">The SAH (single alpha-helix) region is characterized by a high content of charged residues which are predicted to stabilize the alpha-helical structure by ionic bonds. It can refold after extension suggesting an in vivo force-dependent function. The isolated SAH domain is monomeric.</text>
</comment>
<comment type="PTM">
    <text evidence="1">Phosphorylation by AURKB at its C-terminal part is important for AURKB activation by INCENP.</text>
</comment>
<comment type="miscellaneous">
    <molecule>Isoform 1</molecule>
    <text>Major isoform in thymic lymphoma 3SB cells. Fourfold more abundant than isoform 2.</text>
</comment>
<comment type="miscellaneous">
    <molecule>Isoform 2</molecule>
    <text evidence="12">Minor isoform in thymic lymphoma 3SB cells.</text>
</comment>
<comment type="similarity">
    <text evidence="12">Belongs to the INCENP family.</text>
</comment>
<comment type="caution">
    <text evidence="3">Originally predicted to contain a coiled coil domain but shown to contain a stable SAH domain instead.</text>
</comment>
<reference key="1">
    <citation type="journal article" date="1999" name="Mamm. Genome">
        <title>Cloning, expression, and promoter structure of a mammalian inner centromere protein (INCENP).</title>
        <authorList>
            <person name="Saffery R."/>
            <person name="Irvine D.V."/>
            <person name="Kile B.T."/>
            <person name="Hudson D.F."/>
            <person name="Cutts S.M."/>
            <person name="Choo K.H."/>
        </authorList>
    </citation>
    <scope>NUCLEOTIDE SEQUENCE [MRNA] (ISOFORM 1)</scope>
    <source>
        <strain>129</strain>
    </source>
</reference>
<reference key="2">
    <citation type="submission" date="2003-01" db="EMBL/GenBank/DDBJ databases">
        <title>Cloning of mouse inner centromere protein (INCENP) cDNAs.</title>
        <authorList>
            <person name="Katayama H."/>
            <person name="Terada Y."/>
            <person name="Tatsuka M."/>
        </authorList>
    </citation>
    <scope>NUCLEOTIDE SEQUENCE [MRNA] (ISOFORMS 1 AND 2)</scope>
    <source>
        <tissue>Thymus</tissue>
    </source>
</reference>
<reference key="3">
    <citation type="journal article" date="2005" name="Science">
        <title>The transcriptional landscape of the mammalian genome.</title>
        <authorList>
            <person name="Carninci P."/>
            <person name="Kasukawa T."/>
            <person name="Katayama S."/>
            <person name="Gough J."/>
            <person name="Frith M.C."/>
            <person name="Maeda N."/>
            <person name="Oyama R."/>
            <person name="Ravasi T."/>
            <person name="Lenhard B."/>
            <person name="Wells C."/>
            <person name="Kodzius R."/>
            <person name="Shimokawa K."/>
            <person name="Bajic V.B."/>
            <person name="Brenner S.E."/>
            <person name="Batalov S."/>
            <person name="Forrest A.R."/>
            <person name="Zavolan M."/>
            <person name="Davis M.J."/>
            <person name="Wilming L.G."/>
            <person name="Aidinis V."/>
            <person name="Allen J.E."/>
            <person name="Ambesi-Impiombato A."/>
            <person name="Apweiler R."/>
            <person name="Aturaliya R.N."/>
            <person name="Bailey T.L."/>
            <person name="Bansal M."/>
            <person name="Baxter L."/>
            <person name="Beisel K.W."/>
            <person name="Bersano T."/>
            <person name="Bono H."/>
            <person name="Chalk A.M."/>
            <person name="Chiu K.P."/>
            <person name="Choudhary V."/>
            <person name="Christoffels A."/>
            <person name="Clutterbuck D.R."/>
            <person name="Crowe M.L."/>
            <person name="Dalla E."/>
            <person name="Dalrymple B.P."/>
            <person name="de Bono B."/>
            <person name="Della Gatta G."/>
            <person name="di Bernardo D."/>
            <person name="Down T."/>
            <person name="Engstrom P."/>
            <person name="Fagiolini M."/>
            <person name="Faulkner G."/>
            <person name="Fletcher C.F."/>
            <person name="Fukushima T."/>
            <person name="Furuno M."/>
            <person name="Futaki S."/>
            <person name="Gariboldi M."/>
            <person name="Georgii-Hemming P."/>
            <person name="Gingeras T.R."/>
            <person name="Gojobori T."/>
            <person name="Green R.E."/>
            <person name="Gustincich S."/>
            <person name="Harbers M."/>
            <person name="Hayashi Y."/>
            <person name="Hensch T.K."/>
            <person name="Hirokawa N."/>
            <person name="Hill D."/>
            <person name="Huminiecki L."/>
            <person name="Iacono M."/>
            <person name="Ikeo K."/>
            <person name="Iwama A."/>
            <person name="Ishikawa T."/>
            <person name="Jakt M."/>
            <person name="Kanapin A."/>
            <person name="Katoh M."/>
            <person name="Kawasawa Y."/>
            <person name="Kelso J."/>
            <person name="Kitamura H."/>
            <person name="Kitano H."/>
            <person name="Kollias G."/>
            <person name="Krishnan S.P."/>
            <person name="Kruger A."/>
            <person name="Kummerfeld S.K."/>
            <person name="Kurochkin I.V."/>
            <person name="Lareau L.F."/>
            <person name="Lazarevic D."/>
            <person name="Lipovich L."/>
            <person name="Liu J."/>
            <person name="Liuni S."/>
            <person name="McWilliam S."/>
            <person name="Madan Babu M."/>
            <person name="Madera M."/>
            <person name="Marchionni L."/>
            <person name="Matsuda H."/>
            <person name="Matsuzawa S."/>
            <person name="Miki H."/>
            <person name="Mignone F."/>
            <person name="Miyake S."/>
            <person name="Morris K."/>
            <person name="Mottagui-Tabar S."/>
            <person name="Mulder N."/>
            <person name="Nakano N."/>
            <person name="Nakauchi H."/>
            <person name="Ng P."/>
            <person name="Nilsson R."/>
            <person name="Nishiguchi S."/>
            <person name="Nishikawa S."/>
            <person name="Nori F."/>
            <person name="Ohara O."/>
            <person name="Okazaki Y."/>
            <person name="Orlando V."/>
            <person name="Pang K.C."/>
            <person name="Pavan W.J."/>
            <person name="Pavesi G."/>
            <person name="Pesole G."/>
            <person name="Petrovsky N."/>
            <person name="Piazza S."/>
            <person name="Reed J."/>
            <person name="Reid J.F."/>
            <person name="Ring B.Z."/>
            <person name="Ringwald M."/>
            <person name="Rost B."/>
            <person name="Ruan Y."/>
            <person name="Salzberg S.L."/>
            <person name="Sandelin A."/>
            <person name="Schneider C."/>
            <person name="Schoenbach C."/>
            <person name="Sekiguchi K."/>
            <person name="Semple C.A."/>
            <person name="Seno S."/>
            <person name="Sessa L."/>
            <person name="Sheng Y."/>
            <person name="Shibata Y."/>
            <person name="Shimada H."/>
            <person name="Shimada K."/>
            <person name="Silva D."/>
            <person name="Sinclair B."/>
            <person name="Sperling S."/>
            <person name="Stupka E."/>
            <person name="Sugiura K."/>
            <person name="Sultana R."/>
            <person name="Takenaka Y."/>
            <person name="Taki K."/>
            <person name="Tammoja K."/>
            <person name="Tan S.L."/>
            <person name="Tang S."/>
            <person name="Taylor M.S."/>
            <person name="Tegner J."/>
            <person name="Teichmann S.A."/>
            <person name="Ueda H.R."/>
            <person name="van Nimwegen E."/>
            <person name="Verardo R."/>
            <person name="Wei C.L."/>
            <person name="Yagi K."/>
            <person name="Yamanishi H."/>
            <person name="Zabarovsky E."/>
            <person name="Zhu S."/>
            <person name="Zimmer A."/>
            <person name="Hide W."/>
            <person name="Bult C."/>
            <person name="Grimmond S.M."/>
            <person name="Teasdale R.D."/>
            <person name="Liu E.T."/>
            <person name="Brusic V."/>
            <person name="Quackenbush J."/>
            <person name="Wahlestedt C."/>
            <person name="Mattick J.S."/>
            <person name="Hume D.A."/>
            <person name="Kai C."/>
            <person name="Sasaki D."/>
            <person name="Tomaru Y."/>
            <person name="Fukuda S."/>
            <person name="Kanamori-Katayama M."/>
            <person name="Suzuki M."/>
            <person name="Aoki J."/>
            <person name="Arakawa T."/>
            <person name="Iida J."/>
            <person name="Imamura K."/>
            <person name="Itoh M."/>
            <person name="Kato T."/>
            <person name="Kawaji H."/>
            <person name="Kawagashira N."/>
            <person name="Kawashima T."/>
            <person name="Kojima M."/>
            <person name="Kondo S."/>
            <person name="Konno H."/>
            <person name="Nakano K."/>
            <person name="Ninomiya N."/>
            <person name="Nishio T."/>
            <person name="Okada M."/>
            <person name="Plessy C."/>
            <person name="Shibata K."/>
            <person name="Shiraki T."/>
            <person name="Suzuki S."/>
            <person name="Tagami M."/>
            <person name="Waki K."/>
            <person name="Watahiki A."/>
            <person name="Okamura-Oho Y."/>
            <person name="Suzuki H."/>
            <person name="Kawai J."/>
            <person name="Hayashizaki Y."/>
        </authorList>
    </citation>
    <scope>NUCLEOTIDE SEQUENCE [LARGE SCALE MRNA] (ISOFORM 1)</scope>
    <source>
        <strain>C57BL/6J</strain>
        <strain>NOD</strain>
        <tissue>Head</tissue>
        <tissue>Thymus</tissue>
    </source>
</reference>
<reference key="4">
    <citation type="journal article" date="2004" name="Genome Res.">
        <title>The status, quality, and expansion of the NIH full-length cDNA project: the Mammalian Gene Collection (MGC).</title>
        <authorList>
            <consortium name="The MGC Project Team"/>
        </authorList>
    </citation>
    <scope>NUCLEOTIDE SEQUENCE [LARGE SCALE MRNA] (ISOFORM 2)</scope>
    <source>
        <strain>C57BL/6J</strain>
        <strain>FVB/N</strain>
    </source>
</reference>
<reference key="5">
    <citation type="journal article" date="2003" name="EMBO J.">
        <title>Pericentric heterochromatin becomes enriched with H2A.Z during early mammalian development.</title>
        <authorList>
            <person name="Rangasamy D."/>
            <person name="Berven L."/>
            <person name="Ridgway P."/>
            <person name="Tremethick D.J."/>
        </authorList>
    </citation>
    <scope>INTERACTION WITH H2AZ1</scope>
</reference>
<reference key="6">
    <citation type="journal article" date="2003" name="J. Cell Sci.">
        <title>Dynamic relocalization of the chromosomal passenger complex proteins inner centromere protein (INCENP) and aurora-B kinase during male mouse meiosis.</title>
        <authorList>
            <person name="Parra M.T."/>
            <person name="Viera A."/>
            <person name="Gomez R."/>
            <person name="Page J."/>
            <person name="Carmena M."/>
            <person name="Earnshaw W.C."/>
            <person name="Rufas J.S."/>
            <person name="Suja J.A."/>
        </authorList>
    </citation>
    <scope>SUBCELLULAR LOCATION</scope>
</reference>
<reference key="7">
    <citation type="journal article" date="2004" name="J. Biol. Chem.">
        <title>Autophosphorylation of a newly identified site of Aurora-B is indispensable for cytokinesis.</title>
        <authorList>
            <person name="Yasui Y."/>
            <person name="Urano T."/>
            <person name="Kawajiri A."/>
            <person name="Nagata K."/>
            <person name="Tatsuka M."/>
            <person name="Saya H."/>
            <person name="Furukawa K."/>
            <person name="Takahashi T."/>
            <person name="Izawa I."/>
            <person name="Inagaki M."/>
        </authorList>
    </citation>
    <scope>PHOSPHORYLATION BY AURKB</scope>
</reference>
<reference key="8">
    <citation type="journal article" date="2007" name="Proc. Natl. Acad. Sci. U.S.A.">
        <title>Large-scale phosphorylation analysis of mouse liver.</title>
        <authorList>
            <person name="Villen J."/>
            <person name="Beausoleil S.A."/>
            <person name="Gerber S.A."/>
            <person name="Gygi S.P."/>
        </authorList>
    </citation>
    <scope>PHOSPHORYLATION [LARGE SCALE ANALYSIS] AT THR-215 AND SER-218</scope>
    <scope>IDENTIFICATION BY MASS SPECTROMETRY [LARGE SCALE ANALYSIS]</scope>
    <source>
        <tissue>Liver</tissue>
    </source>
</reference>
<reference key="9">
    <citation type="journal article" date="2009" name="Immunity">
        <title>The phagosomal proteome in interferon-gamma-activated macrophages.</title>
        <authorList>
            <person name="Trost M."/>
            <person name="English L."/>
            <person name="Lemieux S."/>
            <person name="Courcelles M."/>
            <person name="Desjardins M."/>
            <person name="Thibault P."/>
        </authorList>
    </citation>
    <scope>PHOSPHORYLATION [LARGE SCALE ANALYSIS] AT SER-796; SER-799 AND THR-800</scope>
    <scope>IDENTIFICATION BY MASS SPECTROMETRY [LARGE SCALE ANALYSIS]</scope>
</reference>
<reference key="10">
    <citation type="journal article" date="2010" name="Cell">
        <title>A tissue-specific atlas of mouse protein phosphorylation and expression.</title>
        <authorList>
            <person name="Huttlin E.L."/>
            <person name="Jedrychowski M.P."/>
            <person name="Elias J.E."/>
            <person name="Goswami T."/>
            <person name="Rad R."/>
            <person name="Beausoleil S.A."/>
            <person name="Villen J."/>
            <person name="Haas W."/>
            <person name="Sowa M.E."/>
            <person name="Gygi S.P."/>
        </authorList>
    </citation>
    <scope>PHOSPHORYLATION [LARGE SCALE ANALYSIS] AT THR-149; SER-190; THR-195; THR-215; SER-218; SER-239; SER-245; SER-248; SER-251; SER-259; SER-284; THR-452; SER-454; SER-796; SER-799; THR-800; SER-861; SER-862 AND SER-867</scope>
    <scope>IDENTIFICATION BY MASS SPECTROMETRY [LARGE SCALE ANALYSIS]</scope>
    <source>
        <tissue>Lung</tissue>
        <tissue>Spleen</tissue>
        <tissue>Testis</tissue>
    </source>
</reference>
<reference key="11">
    <citation type="journal article" date="2010" name="Mol. Cell. Proteomics">
        <title>Sialic acid-focused quantitative mouse serum glycoproteomics by multiple reaction monitoring assay.</title>
        <authorList>
            <person name="Kurogochi M."/>
            <person name="Matsushista T."/>
            <person name="Amano M."/>
            <person name="Furukawa J."/>
            <person name="Shinohara Y."/>
            <person name="Aoshima M."/>
            <person name="Nishimura S."/>
        </authorList>
    </citation>
    <scope>GLYCOSYLATION AT ASN-450</scope>
    <scope>IDENTIFICATION BY MASS SPECTROMETRY</scope>
</reference>
<name>INCE_MOUSE</name>
<evidence type="ECO:0000250" key="1"/>
<evidence type="ECO:0000250" key="2">
    <source>
        <dbReference type="UniProtKB" id="O13024"/>
    </source>
</evidence>
<evidence type="ECO:0000250" key="3">
    <source>
        <dbReference type="UniProtKB" id="P53352"/>
    </source>
</evidence>
<evidence type="ECO:0000250" key="4">
    <source>
        <dbReference type="UniProtKB" id="Q9NQS7"/>
    </source>
</evidence>
<evidence type="ECO:0000255" key="5"/>
<evidence type="ECO:0000256" key="6">
    <source>
        <dbReference type="SAM" id="MobiDB-lite"/>
    </source>
</evidence>
<evidence type="ECO:0000269" key="7">
    <source>
    </source>
</evidence>
<evidence type="ECO:0000269" key="8">
    <source>
    </source>
</evidence>
<evidence type="ECO:0000269" key="9">
    <source>
    </source>
</evidence>
<evidence type="ECO:0000303" key="10">
    <source>
    </source>
</evidence>
<evidence type="ECO:0000303" key="11">
    <source ref="2"/>
</evidence>
<evidence type="ECO:0000305" key="12"/>
<evidence type="ECO:0007744" key="13">
    <source>
    </source>
</evidence>
<evidence type="ECO:0007744" key="14">
    <source>
    </source>
</evidence>
<evidence type="ECO:0007744" key="15">
    <source>
    </source>
</evidence>
<sequence length="880" mass="101209">MGTTAPGPICLLDLCDQKLLDFVCNVDNKDFMWLKEIEEEAERMFIREFSNEPELMPKTPSQKNRRKKRRVSNIQDENRDPVRKRLSRRKSRSSQVGTRHLRSKPVTIVEENGFPVLQRITRATAAAAAAAAAASVASASSSSTAGSPTVLTKKAVVEISTSERLSAELQLTKLKGSLPPSPVSQGTLTSEEELTPKKSEAGKLDSVTVNSLKATPQSPKNRGVGEGRSVSKLKIARASWGLQDSPGSTDSPWQERVLSPILLNNILPTTAKSPLGNIRSVRRSLISQDSQVPLASKYNLVAKQENGSRRSSRRIAKKAGKEPEASARIICHSYLERLLNVEVPQNVGLEQEPVEVAEPEEAEEEQEVSKNSGCPSKPRSATKIAISTPTSKPAAAGQTTTVEEQEAELDQTDGHREPPQSVRRKRSYKQAISEPDEEQLEDEELQPCQNKTPSPPCPANKVVRPLRTFLHTVQKNQMLMTPTLASRSSVMKSFIKRNTPLRVDPKCSFVEKERQRLESLRRKEEAEQRRRQKVEEDKRRRLEEVKLKREERLRKVLQARERVEQMKEEKKKQIEQKFAQIDEKTEKAKEERLAEKAKKKATAKKMEEVEARRKQEEEARRLRWLQQEEEERRHQEMLQRKKEEEQERRKAAEARRLAEQREQERRREQERREQERREQERREQERKEQERREQEQERLRAKREMQEREKALRLQKERLQKELEEKKRKEEQQRLAEQQLQEEQAKKAKEVAAARKVLNMTVDVQSPVCTSYQMTPQGPKSIPKISVDDYGMDLNSDDSTDDESHPRKPIPSWAKGTQLSQAIVHQYYHPPNILELFGSILPLDLEDIFKKRKTRYHKRTSSAVWNSPPLKATMVPSSGD</sequence>
<keyword id="KW-0025">Alternative splicing</keyword>
<keyword id="KW-0131">Cell cycle</keyword>
<keyword id="KW-0132">Cell division</keyword>
<keyword id="KW-0137">Centromere</keyword>
<keyword id="KW-0158">Chromosome</keyword>
<keyword id="KW-0159">Chromosome partition</keyword>
<keyword id="KW-0175">Coiled coil</keyword>
<keyword id="KW-0963">Cytoplasm</keyword>
<keyword id="KW-0206">Cytoskeleton</keyword>
<keyword id="KW-0325">Glycoprotein</keyword>
<keyword id="KW-0995">Kinetochore</keyword>
<keyword id="KW-0493">Microtubule</keyword>
<keyword id="KW-0498">Mitosis</keyword>
<keyword id="KW-0539">Nucleus</keyword>
<keyword id="KW-0597">Phosphoprotein</keyword>
<keyword id="KW-1185">Reference proteome</keyword>
<feature type="chain" id="PRO_0000084202" description="Inner centromere protein">
    <location>
        <begin position="1"/>
        <end position="880"/>
    </location>
</feature>
<feature type="region of interest" description="Disordered" evidence="6">
    <location>
        <begin position="52"/>
        <end position="104"/>
    </location>
</feature>
<feature type="region of interest" description="Disordered" evidence="6">
    <location>
        <begin position="175"/>
        <end position="229"/>
    </location>
</feature>
<feature type="region of interest" description="Disordered" evidence="6">
    <location>
        <begin position="303"/>
        <end position="322"/>
    </location>
</feature>
<feature type="region of interest" description="Disordered" evidence="6">
    <location>
        <begin position="350"/>
        <end position="461"/>
    </location>
</feature>
<feature type="region of interest" description="SAH" evidence="3">
    <location>
        <begin position="506"/>
        <end position="733"/>
    </location>
</feature>
<feature type="region of interest" description="Disordered" evidence="6">
    <location>
        <begin position="513"/>
        <end position="541"/>
    </location>
</feature>
<feature type="region of interest" description="Disordered" evidence="6">
    <location>
        <begin position="563"/>
        <end position="617"/>
    </location>
</feature>
<feature type="region of interest" description="Disordered" evidence="6">
    <location>
        <begin position="629"/>
        <end position="713"/>
    </location>
</feature>
<feature type="region of interest" description="Disordered" evidence="6">
    <location>
        <begin position="775"/>
        <end position="813"/>
    </location>
</feature>
<feature type="region of interest" description="IN box" evidence="12">
    <location>
        <begin position="794"/>
        <end position="868"/>
    </location>
</feature>
<feature type="coiled-coil region" evidence="5">
    <location>
        <begin position="506"/>
        <end position="759"/>
    </location>
</feature>
<feature type="compositionally biased region" description="Basic and acidic residues" evidence="6">
    <location>
        <begin position="194"/>
        <end position="203"/>
    </location>
</feature>
<feature type="compositionally biased region" description="Polar residues" evidence="6">
    <location>
        <begin position="207"/>
        <end position="220"/>
    </location>
</feature>
<feature type="compositionally biased region" description="Acidic residues" evidence="6">
    <location>
        <begin position="352"/>
        <end position="366"/>
    </location>
</feature>
<feature type="compositionally biased region" description="Polar residues" evidence="6">
    <location>
        <begin position="385"/>
        <end position="402"/>
    </location>
</feature>
<feature type="compositionally biased region" description="Acidic residues" evidence="6">
    <location>
        <begin position="434"/>
        <end position="445"/>
    </location>
</feature>
<feature type="compositionally biased region" description="Basic and acidic residues" evidence="6">
    <location>
        <begin position="563"/>
        <end position="596"/>
    </location>
</feature>
<feature type="compositionally biased region" description="Basic and acidic residues" evidence="6">
    <location>
        <begin position="604"/>
        <end position="617"/>
    </location>
</feature>
<feature type="compositionally biased region" description="Basic and acidic residues" evidence="6">
    <location>
        <begin position="630"/>
        <end position="713"/>
    </location>
</feature>
<feature type="modified residue" description="Phosphoserine" evidence="4">
    <location>
        <position position="72"/>
    </location>
</feature>
<feature type="modified residue" description="Phosphoserine" evidence="4">
    <location>
        <position position="142"/>
    </location>
</feature>
<feature type="modified residue" description="Phosphoserine" evidence="4">
    <location>
        <position position="147"/>
    </location>
</feature>
<feature type="modified residue" description="Phosphothreonine" evidence="15">
    <location>
        <position position="149"/>
    </location>
</feature>
<feature type="modified residue" description="Phosphothreonine" evidence="4">
    <location>
        <position position="189"/>
    </location>
</feature>
<feature type="modified residue" description="Phosphoserine" evidence="15">
    <location>
        <position position="190"/>
    </location>
</feature>
<feature type="modified residue" description="Phosphothreonine" evidence="15">
    <location>
        <position position="195"/>
    </location>
</feature>
<feature type="modified residue" description="Phosphothreonine" evidence="13 15">
    <location>
        <position position="215"/>
    </location>
</feature>
<feature type="modified residue" description="Phosphoserine" evidence="13 15">
    <location>
        <position position="218"/>
    </location>
</feature>
<feature type="modified residue" description="Phosphoserine" evidence="15">
    <location>
        <position position="239"/>
    </location>
</feature>
<feature type="modified residue" description="Phosphoserine" evidence="15">
    <location>
        <position position="245"/>
    </location>
</feature>
<feature type="modified residue" description="Phosphoserine" evidence="15">
    <location>
        <position position="248"/>
    </location>
</feature>
<feature type="modified residue" description="Phosphoserine" evidence="15">
    <location>
        <position position="251"/>
    </location>
</feature>
<feature type="modified residue" description="Phosphoserine" evidence="15">
    <location>
        <position position="259"/>
    </location>
</feature>
<feature type="modified residue" description="Phosphothreonine" evidence="4">
    <location>
        <position position="270"/>
    </location>
</feature>
<feature type="modified residue" description="Phosphoserine" evidence="15">
    <location>
        <position position="284"/>
    </location>
</feature>
<feature type="modified residue" description="Phosphoserine" evidence="4">
    <location>
        <position position="290"/>
    </location>
</feature>
<feature type="modified residue" description="Phosphoserine" evidence="4">
    <location>
        <position position="376"/>
    </location>
</feature>
<feature type="modified residue" description="Phosphothreonine" evidence="4">
    <location>
        <position position="382"/>
    </location>
</feature>
<feature type="modified residue" description="Phosphoserine" evidence="4">
    <location>
        <position position="421"/>
    </location>
</feature>
<feature type="modified residue" description="Phosphothreonine" evidence="15">
    <location>
        <position position="452"/>
    </location>
</feature>
<feature type="modified residue" description="Phosphoserine" evidence="15">
    <location>
        <position position="454"/>
    </location>
</feature>
<feature type="modified residue" description="Phosphoserine" evidence="4">
    <location>
        <position position="488"/>
    </location>
</feature>
<feature type="modified residue" description="Phosphoserine" evidence="14 15">
    <location>
        <position position="796"/>
    </location>
</feature>
<feature type="modified residue" description="Phosphoserine" evidence="14 15">
    <location>
        <position position="799"/>
    </location>
</feature>
<feature type="modified residue" description="Phosphothreonine" evidence="14 15">
    <location>
        <position position="800"/>
    </location>
</feature>
<feature type="modified residue" description="Phosphothreonine; by AURKB" evidence="4">
    <location>
        <position position="860"/>
    </location>
</feature>
<feature type="modified residue" description="Phosphoserine" evidence="15">
    <location>
        <position position="861"/>
    </location>
</feature>
<feature type="modified residue" description="Phosphoserine" evidence="15">
    <location>
        <position position="862"/>
    </location>
</feature>
<feature type="modified residue" description="Phosphoserine" evidence="15">
    <location>
        <position position="867"/>
    </location>
</feature>
<feature type="glycosylation site" description="N-linked (GlcNAc...) asparagine" evidence="9">
    <location>
        <position position="450"/>
    </location>
</feature>
<feature type="splice variant" id="VSP_007233" description="In isoform 2." evidence="10 11">
    <location>
        <begin position="507"/>
        <end position="510"/>
    </location>
</feature>
<feature type="sequence conflict" description="In Ref. 1; AAD32094." evidence="12" ref="1">
    <original>G</original>
    <variation>S</variation>
    <location>
        <position position="397"/>
    </location>
</feature>
<feature type="sequence conflict" description="In Ref. 4; AAH52414." evidence="12" ref="4">
    <original>T</original>
    <variation>I</variation>
    <location>
        <position position="412"/>
    </location>
</feature>
<feature type="sequence conflict" description="In Ref. 1; AAD32094." evidence="12" ref="1">
    <original>C</original>
    <variation>F</variation>
    <location>
        <position position="448"/>
    </location>
</feature>
<feature type="sequence conflict" description="In Ref. 1; AAD32094." evidence="12" ref="1">
    <original>K</original>
    <variation>R</variation>
    <location>
        <position position="687"/>
    </location>
</feature>